<sequence length="181" mass="19565">MEQFRGTTILSVRRNGKVVIGGDGQVSMGSTIMKANARKVRRLYNGKVIAGFAGGTADAFTLFERFESKLEKHSGNLTRAAVELAKDWRTDRILRRLEALLTVADSKASLIITGLGDVIEPEQSLMAIGSGGSFAQAAAKALLENTKLSARKIVEKALTIAADICIYTNQNFTIEELDSES</sequence>
<protein>
    <recommendedName>
        <fullName evidence="1">ATP-dependent protease subunit HslV</fullName>
        <ecNumber evidence="1">3.4.25.2</ecNumber>
    </recommendedName>
</protein>
<gene>
    <name evidence="1" type="primary">hslV</name>
    <name type="ordered locus">CBUD_2112</name>
</gene>
<proteinExistence type="inferred from homology"/>
<comment type="function">
    <text evidence="1">Protease subunit of a proteasome-like degradation complex believed to be a general protein degrading machinery.</text>
</comment>
<comment type="catalytic activity">
    <reaction evidence="1">
        <text>ATP-dependent cleavage of peptide bonds with broad specificity.</text>
        <dbReference type="EC" id="3.4.25.2"/>
    </reaction>
</comment>
<comment type="activity regulation">
    <text evidence="1">Allosterically activated by HslU binding.</text>
</comment>
<comment type="subunit">
    <text evidence="1">A double ring-shaped homohexamer of HslV is capped on each side by a ring-shaped HslU homohexamer. The assembly of the HslU/HslV complex is dependent on binding of ATP.</text>
</comment>
<comment type="subcellular location">
    <subcellularLocation>
        <location evidence="1">Cytoplasm</location>
    </subcellularLocation>
</comment>
<comment type="similarity">
    <text evidence="1">Belongs to the peptidase T1B family. HslV subfamily.</text>
</comment>
<comment type="sequence caution" evidence="2">
    <conflict type="erroneous initiation">
        <sequence resource="EMBL-CDS" id="ABS76743"/>
    </conflict>
</comment>
<accession>A9KH30</accession>
<keyword id="KW-0021">Allosteric enzyme</keyword>
<keyword id="KW-0963">Cytoplasm</keyword>
<keyword id="KW-0378">Hydrolase</keyword>
<keyword id="KW-0479">Metal-binding</keyword>
<keyword id="KW-0645">Protease</keyword>
<keyword id="KW-0915">Sodium</keyword>
<keyword id="KW-0888">Threonine protease</keyword>
<organism>
    <name type="scientific">Coxiella burnetii (strain Dugway 5J108-111)</name>
    <dbReference type="NCBI Taxonomy" id="434922"/>
    <lineage>
        <taxon>Bacteria</taxon>
        <taxon>Pseudomonadati</taxon>
        <taxon>Pseudomonadota</taxon>
        <taxon>Gammaproteobacteria</taxon>
        <taxon>Legionellales</taxon>
        <taxon>Coxiellaceae</taxon>
        <taxon>Coxiella</taxon>
    </lineage>
</organism>
<name>HSLV_COXBN</name>
<feature type="chain" id="PRO_1000078418" description="ATP-dependent protease subunit HslV">
    <location>
        <begin position="1"/>
        <end position="181"/>
    </location>
</feature>
<feature type="active site" evidence="1">
    <location>
        <position position="7"/>
    </location>
</feature>
<feature type="binding site" evidence="1">
    <location>
        <position position="162"/>
    </location>
    <ligand>
        <name>Na(+)</name>
        <dbReference type="ChEBI" id="CHEBI:29101"/>
    </ligand>
</feature>
<feature type="binding site" evidence="1">
    <location>
        <position position="165"/>
    </location>
    <ligand>
        <name>Na(+)</name>
        <dbReference type="ChEBI" id="CHEBI:29101"/>
    </ligand>
</feature>
<feature type="binding site" evidence="1">
    <location>
        <position position="168"/>
    </location>
    <ligand>
        <name>Na(+)</name>
        <dbReference type="ChEBI" id="CHEBI:29101"/>
    </ligand>
</feature>
<evidence type="ECO:0000255" key="1">
    <source>
        <dbReference type="HAMAP-Rule" id="MF_00248"/>
    </source>
</evidence>
<evidence type="ECO:0000305" key="2"/>
<dbReference type="EC" id="3.4.25.2" evidence="1"/>
<dbReference type="EMBL" id="CP000733">
    <property type="protein sequence ID" value="ABS76743.2"/>
    <property type="status" value="ALT_INIT"/>
    <property type="molecule type" value="Genomic_DNA"/>
</dbReference>
<dbReference type="RefSeq" id="WP_043881074.1">
    <property type="nucleotide sequence ID" value="NC_009727.1"/>
</dbReference>
<dbReference type="SMR" id="A9KH30"/>
<dbReference type="MEROPS" id="T01.006"/>
<dbReference type="KEGG" id="cbd:CBUD_2112"/>
<dbReference type="HOGENOM" id="CLU_093872_1_0_6"/>
<dbReference type="Proteomes" id="UP000008555">
    <property type="component" value="Chromosome"/>
</dbReference>
<dbReference type="GO" id="GO:0009376">
    <property type="term" value="C:HslUV protease complex"/>
    <property type="evidence" value="ECO:0007669"/>
    <property type="project" value="UniProtKB-UniRule"/>
</dbReference>
<dbReference type="GO" id="GO:0005839">
    <property type="term" value="C:proteasome core complex"/>
    <property type="evidence" value="ECO:0007669"/>
    <property type="project" value="InterPro"/>
</dbReference>
<dbReference type="GO" id="GO:0046872">
    <property type="term" value="F:metal ion binding"/>
    <property type="evidence" value="ECO:0007669"/>
    <property type="project" value="UniProtKB-KW"/>
</dbReference>
<dbReference type="GO" id="GO:0004298">
    <property type="term" value="F:threonine-type endopeptidase activity"/>
    <property type="evidence" value="ECO:0007669"/>
    <property type="project" value="UniProtKB-KW"/>
</dbReference>
<dbReference type="GO" id="GO:0051603">
    <property type="term" value="P:proteolysis involved in protein catabolic process"/>
    <property type="evidence" value="ECO:0007669"/>
    <property type="project" value="InterPro"/>
</dbReference>
<dbReference type="CDD" id="cd01913">
    <property type="entry name" value="protease_HslV"/>
    <property type="match status" value="1"/>
</dbReference>
<dbReference type="FunFam" id="3.60.20.10:FF:000002">
    <property type="entry name" value="ATP-dependent protease subunit HslV"/>
    <property type="match status" value="1"/>
</dbReference>
<dbReference type="Gene3D" id="3.60.20.10">
    <property type="entry name" value="Glutamine Phosphoribosylpyrophosphate, subunit 1, domain 1"/>
    <property type="match status" value="1"/>
</dbReference>
<dbReference type="HAMAP" id="MF_00248">
    <property type="entry name" value="HslV"/>
    <property type="match status" value="1"/>
</dbReference>
<dbReference type="InterPro" id="IPR022281">
    <property type="entry name" value="ATP-dep_Prtase_HsIV_su"/>
</dbReference>
<dbReference type="InterPro" id="IPR029055">
    <property type="entry name" value="Ntn_hydrolases_N"/>
</dbReference>
<dbReference type="InterPro" id="IPR001353">
    <property type="entry name" value="Proteasome_sua/b"/>
</dbReference>
<dbReference type="InterPro" id="IPR023333">
    <property type="entry name" value="Proteasome_suB-type"/>
</dbReference>
<dbReference type="NCBIfam" id="TIGR03692">
    <property type="entry name" value="ATP_dep_HslV"/>
    <property type="match status" value="1"/>
</dbReference>
<dbReference type="NCBIfam" id="NF003964">
    <property type="entry name" value="PRK05456.1"/>
    <property type="match status" value="1"/>
</dbReference>
<dbReference type="PANTHER" id="PTHR32194:SF0">
    <property type="entry name" value="ATP-DEPENDENT PROTEASE SUBUNIT HSLV"/>
    <property type="match status" value="1"/>
</dbReference>
<dbReference type="PANTHER" id="PTHR32194">
    <property type="entry name" value="METALLOPROTEASE TLDD"/>
    <property type="match status" value="1"/>
</dbReference>
<dbReference type="Pfam" id="PF00227">
    <property type="entry name" value="Proteasome"/>
    <property type="match status" value="1"/>
</dbReference>
<dbReference type="PIRSF" id="PIRSF039093">
    <property type="entry name" value="HslV"/>
    <property type="match status" value="1"/>
</dbReference>
<dbReference type="SUPFAM" id="SSF56235">
    <property type="entry name" value="N-terminal nucleophile aminohydrolases (Ntn hydrolases)"/>
    <property type="match status" value="1"/>
</dbReference>
<dbReference type="PROSITE" id="PS51476">
    <property type="entry name" value="PROTEASOME_BETA_2"/>
    <property type="match status" value="1"/>
</dbReference>
<reference key="1">
    <citation type="journal article" date="2009" name="Infect. Immun.">
        <title>Comparative genomics reveal extensive transposon-mediated genomic plasticity and diversity among potential effector proteins within the genus Coxiella.</title>
        <authorList>
            <person name="Beare P.A."/>
            <person name="Unsworth N."/>
            <person name="Andoh M."/>
            <person name="Voth D.E."/>
            <person name="Omsland A."/>
            <person name="Gilk S.D."/>
            <person name="Williams K.P."/>
            <person name="Sobral B.W."/>
            <person name="Kupko J.J. III"/>
            <person name="Porcella S.F."/>
            <person name="Samuel J.E."/>
            <person name="Heinzen R.A."/>
        </authorList>
    </citation>
    <scope>NUCLEOTIDE SEQUENCE [LARGE SCALE GENOMIC DNA]</scope>
    <source>
        <strain>Dugway 5J108-111</strain>
    </source>
</reference>